<gene>
    <name evidence="1" type="primary">rpmA</name>
    <name type="ordered locus">HPAG1_0299</name>
</gene>
<name>RL27_HELPH</name>
<evidence type="ECO:0000255" key="1">
    <source>
        <dbReference type="HAMAP-Rule" id="MF_00539"/>
    </source>
</evidence>
<evidence type="ECO:0000256" key="2">
    <source>
        <dbReference type="SAM" id="MobiDB-lite"/>
    </source>
</evidence>
<evidence type="ECO:0000305" key="3"/>
<sequence length="88" mass="9778">MAHKKGQGSTQNNRDSAGRRLGVKKFGSEFVRAGNIIVRQRGTKMHPGNNVGMGKDHTLYALIDGVVKFEHKDRNRKKVSVVSQNFGE</sequence>
<dbReference type="EMBL" id="CP000241">
    <property type="protein sequence ID" value="ABF84366.1"/>
    <property type="molecule type" value="Genomic_DNA"/>
</dbReference>
<dbReference type="RefSeq" id="WP_000940618.1">
    <property type="nucleotide sequence ID" value="NC_008086.1"/>
</dbReference>
<dbReference type="SMR" id="Q1CUK6"/>
<dbReference type="GeneID" id="93236667"/>
<dbReference type="KEGG" id="hpa:HPAG1_0299"/>
<dbReference type="HOGENOM" id="CLU_095424_4_0_7"/>
<dbReference type="GO" id="GO:0022625">
    <property type="term" value="C:cytosolic large ribosomal subunit"/>
    <property type="evidence" value="ECO:0007669"/>
    <property type="project" value="TreeGrafter"/>
</dbReference>
<dbReference type="GO" id="GO:0003735">
    <property type="term" value="F:structural constituent of ribosome"/>
    <property type="evidence" value="ECO:0007669"/>
    <property type="project" value="InterPro"/>
</dbReference>
<dbReference type="GO" id="GO:0006412">
    <property type="term" value="P:translation"/>
    <property type="evidence" value="ECO:0007669"/>
    <property type="project" value="UniProtKB-UniRule"/>
</dbReference>
<dbReference type="FunFam" id="2.40.50.100:FF:000026">
    <property type="entry name" value="50S ribosomal protein L27"/>
    <property type="match status" value="1"/>
</dbReference>
<dbReference type="Gene3D" id="2.40.50.100">
    <property type="match status" value="1"/>
</dbReference>
<dbReference type="HAMAP" id="MF_00539">
    <property type="entry name" value="Ribosomal_bL27"/>
    <property type="match status" value="1"/>
</dbReference>
<dbReference type="InterPro" id="IPR001684">
    <property type="entry name" value="Ribosomal_bL27"/>
</dbReference>
<dbReference type="InterPro" id="IPR018261">
    <property type="entry name" value="Ribosomal_bL27_CS"/>
</dbReference>
<dbReference type="NCBIfam" id="TIGR00062">
    <property type="entry name" value="L27"/>
    <property type="match status" value="1"/>
</dbReference>
<dbReference type="PANTHER" id="PTHR15893:SF0">
    <property type="entry name" value="LARGE RIBOSOMAL SUBUNIT PROTEIN BL27M"/>
    <property type="match status" value="1"/>
</dbReference>
<dbReference type="PANTHER" id="PTHR15893">
    <property type="entry name" value="RIBOSOMAL PROTEIN L27"/>
    <property type="match status" value="1"/>
</dbReference>
<dbReference type="Pfam" id="PF01016">
    <property type="entry name" value="Ribosomal_L27"/>
    <property type="match status" value="1"/>
</dbReference>
<dbReference type="PRINTS" id="PR00063">
    <property type="entry name" value="RIBOSOMALL27"/>
</dbReference>
<dbReference type="SUPFAM" id="SSF110324">
    <property type="entry name" value="Ribosomal L27 protein-like"/>
    <property type="match status" value="1"/>
</dbReference>
<dbReference type="PROSITE" id="PS00831">
    <property type="entry name" value="RIBOSOMAL_L27"/>
    <property type="match status" value="1"/>
</dbReference>
<organism>
    <name type="scientific">Helicobacter pylori (strain HPAG1)</name>
    <dbReference type="NCBI Taxonomy" id="357544"/>
    <lineage>
        <taxon>Bacteria</taxon>
        <taxon>Pseudomonadati</taxon>
        <taxon>Campylobacterota</taxon>
        <taxon>Epsilonproteobacteria</taxon>
        <taxon>Campylobacterales</taxon>
        <taxon>Helicobacteraceae</taxon>
        <taxon>Helicobacter</taxon>
    </lineage>
</organism>
<accession>Q1CUK6</accession>
<keyword id="KW-0687">Ribonucleoprotein</keyword>
<keyword id="KW-0689">Ribosomal protein</keyword>
<reference key="1">
    <citation type="journal article" date="2006" name="Proc. Natl. Acad. Sci. U.S.A.">
        <title>The complete genome sequence of a chronic atrophic gastritis Helicobacter pylori strain: evolution during disease progression.</title>
        <authorList>
            <person name="Oh J.D."/>
            <person name="Kling-Baeckhed H."/>
            <person name="Giannakis M."/>
            <person name="Xu J."/>
            <person name="Fulton R.S."/>
            <person name="Fulton L.A."/>
            <person name="Cordum H.S."/>
            <person name="Wang C."/>
            <person name="Elliott G."/>
            <person name="Edwards J."/>
            <person name="Mardis E.R."/>
            <person name="Engstrand L.G."/>
            <person name="Gordon J.I."/>
        </authorList>
    </citation>
    <scope>NUCLEOTIDE SEQUENCE [LARGE SCALE GENOMIC DNA]</scope>
    <source>
        <strain>HPAG1</strain>
    </source>
</reference>
<proteinExistence type="inferred from homology"/>
<protein>
    <recommendedName>
        <fullName evidence="1">Large ribosomal subunit protein bL27</fullName>
    </recommendedName>
    <alternativeName>
        <fullName evidence="3">50S ribosomal protein L27</fullName>
    </alternativeName>
</protein>
<comment type="similarity">
    <text evidence="1">Belongs to the bacterial ribosomal protein bL27 family.</text>
</comment>
<feature type="chain" id="PRO_1000017497" description="Large ribosomal subunit protein bL27">
    <location>
        <begin position="1"/>
        <end position="88"/>
    </location>
</feature>
<feature type="region of interest" description="Disordered" evidence="2">
    <location>
        <begin position="1"/>
        <end position="21"/>
    </location>
</feature>